<keyword id="KW-0963">Cytoplasm</keyword>
<keyword id="KW-1017">Isopeptide bond</keyword>
<keyword id="KW-0539">Nucleus</keyword>
<keyword id="KW-0687">Ribonucleoprotein</keyword>
<keyword id="KW-0689">Ribosomal protein</keyword>
<keyword id="KW-0832">Ubl conjugation</keyword>
<name>RL40_EIMBO</name>
<dbReference type="PIR" id="B48470">
    <property type="entry name" value="B48470"/>
</dbReference>
<dbReference type="SMR" id="P46575"/>
<dbReference type="GO" id="GO:0005737">
    <property type="term" value="C:cytoplasm"/>
    <property type="evidence" value="ECO:0007669"/>
    <property type="project" value="UniProtKB-SubCell"/>
</dbReference>
<dbReference type="GO" id="GO:0005634">
    <property type="term" value="C:nucleus"/>
    <property type="evidence" value="ECO:0007669"/>
    <property type="project" value="UniProtKB-SubCell"/>
</dbReference>
<dbReference type="GO" id="GO:1990904">
    <property type="term" value="C:ribonucleoprotein complex"/>
    <property type="evidence" value="ECO:0007669"/>
    <property type="project" value="UniProtKB-KW"/>
</dbReference>
<dbReference type="GO" id="GO:0005840">
    <property type="term" value="C:ribosome"/>
    <property type="evidence" value="ECO:0007669"/>
    <property type="project" value="UniProtKB-KW"/>
</dbReference>
<dbReference type="GO" id="GO:0003735">
    <property type="term" value="F:structural constituent of ribosome"/>
    <property type="evidence" value="ECO:0007669"/>
    <property type="project" value="InterPro"/>
</dbReference>
<dbReference type="GO" id="GO:0006412">
    <property type="term" value="P:translation"/>
    <property type="evidence" value="ECO:0007669"/>
    <property type="project" value="InterPro"/>
</dbReference>
<dbReference type="CDD" id="cd01803">
    <property type="entry name" value="Ubl_ubiquitin"/>
    <property type="match status" value="1"/>
</dbReference>
<dbReference type="FunFam" id="3.10.20.90:FF:000014">
    <property type="entry name" value="Ubiquitin-60S ribosomal L40 fusion"/>
    <property type="match status" value="1"/>
</dbReference>
<dbReference type="FunFam" id="4.10.1060.50:FF:000001">
    <property type="entry name" value="ubiquitin-60S ribosomal protein L40"/>
    <property type="match status" value="1"/>
</dbReference>
<dbReference type="Gene3D" id="4.10.1060.50">
    <property type="match status" value="1"/>
</dbReference>
<dbReference type="Gene3D" id="3.10.20.90">
    <property type="entry name" value="Phosphatidylinositol 3-kinase Catalytic Subunit, Chain A, domain 1"/>
    <property type="match status" value="1"/>
</dbReference>
<dbReference type="InterPro" id="IPR001975">
    <property type="entry name" value="Ribosomal_eL40_dom"/>
</dbReference>
<dbReference type="InterPro" id="IPR038587">
    <property type="entry name" value="Ribosomal_eL40_sf"/>
</dbReference>
<dbReference type="InterPro" id="IPR011332">
    <property type="entry name" value="Ribosomal_zn-bd"/>
</dbReference>
<dbReference type="InterPro" id="IPR000626">
    <property type="entry name" value="Ubiquitin-like_dom"/>
</dbReference>
<dbReference type="InterPro" id="IPR029071">
    <property type="entry name" value="Ubiquitin-like_domsf"/>
</dbReference>
<dbReference type="InterPro" id="IPR019954">
    <property type="entry name" value="Ubiquitin_CS"/>
</dbReference>
<dbReference type="InterPro" id="IPR019956">
    <property type="entry name" value="Ubiquitin_dom"/>
</dbReference>
<dbReference type="InterPro" id="IPR050158">
    <property type="entry name" value="Ubiquitin_ubiquitin-like"/>
</dbReference>
<dbReference type="PANTHER" id="PTHR10666">
    <property type="entry name" value="UBIQUITIN"/>
    <property type="match status" value="1"/>
</dbReference>
<dbReference type="Pfam" id="PF01020">
    <property type="entry name" value="Ribosomal_L40e"/>
    <property type="match status" value="1"/>
</dbReference>
<dbReference type="Pfam" id="PF00240">
    <property type="entry name" value="ubiquitin"/>
    <property type="match status" value="1"/>
</dbReference>
<dbReference type="PRINTS" id="PR00348">
    <property type="entry name" value="UBIQUITIN"/>
</dbReference>
<dbReference type="SMART" id="SM01377">
    <property type="entry name" value="Ribosomal_L40e"/>
    <property type="match status" value="1"/>
</dbReference>
<dbReference type="SMART" id="SM00213">
    <property type="entry name" value="UBQ"/>
    <property type="match status" value="1"/>
</dbReference>
<dbReference type="SUPFAM" id="SSF54236">
    <property type="entry name" value="Ubiquitin-like"/>
    <property type="match status" value="1"/>
</dbReference>
<dbReference type="SUPFAM" id="SSF57829">
    <property type="entry name" value="Zn-binding ribosomal proteins"/>
    <property type="match status" value="1"/>
</dbReference>
<dbReference type="PROSITE" id="PS00299">
    <property type="entry name" value="UBIQUITIN_1"/>
    <property type="match status" value="1"/>
</dbReference>
<dbReference type="PROSITE" id="PS50053">
    <property type="entry name" value="UBIQUITIN_2"/>
    <property type="match status" value="1"/>
</dbReference>
<evidence type="ECO:0000250" key="1"/>
<evidence type="ECO:0000255" key="2">
    <source>
        <dbReference type="PROSITE-ProRule" id="PRU00214"/>
    </source>
</evidence>
<evidence type="ECO:0000256" key="3">
    <source>
        <dbReference type="SAM" id="MobiDB-lite"/>
    </source>
</evidence>
<evidence type="ECO:0000305" key="4"/>
<accession>P46575</accession>
<accession>P46574</accession>
<sequence length="129" mass="14645">MQIFVKTLTGKTITLDVEPSDTIENVKAKIQDKEGIPPDQQRLIFAGKQLEDGRTLSDYNIQKESTLHLVLRLRGGIIEPSLALLASKYNCEKKICRKCYARLPPRATNCRKKKCGHTSQLRPKKKPKN</sequence>
<reference key="1">
    <citation type="journal article" date="1993" name="Mol. Biochem. Parasitol.">
        <title>Developmental gene expression in Eimeria bovis.</title>
        <authorList>
            <person name="Abrahamsen M.S."/>
            <person name="Clark T.G."/>
            <person name="Mascolo P."/>
            <person name="Speer C.A."/>
            <person name="White M.W."/>
        </authorList>
    </citation>
    <scope>NUCLEOTIDE SEQUENCE [MRNA]</scope>
</reference>
<feature type="chain" id="PRO_0000114823" description="Ubiquitin">
    <location>
        <begin position="1"/>
        <end position="76"/>
    </location>
</feature>
<feature type="chain" id="PRO_0000138764" description="Large ribosomal subunit protein eL40">
    <location>
        <begin position="77"/>
        <end position="129"/>
    </location>
</feature>
<feature type="domain" description="Ubiquitin-like" evidence="2">
    <location>
        <begin position="1"/>
        <end position="76"/>
    </location>
</feature>
<feature type="region of interest" description="Disordered" evidence="3">
    <location>
        <begin position="110"/>
        <end position="129"/>
    </location>
</feature>
<feature type="cross-link" description="Glycyl lysine isopeptide (Lys-Gly) (interchain with G-Cter in ubiquitin)" evidence="1">
    <location>
        <position position="48"/>
    </location>
</feature>
<feature type="cross-link" description="Glycyl lysine isopeptide (Gly-Lys) (interchain with K-? in acceptor proteins)" evidence="2">
    <location>
        <position position="76"/>
    </location>
</feature>
<protein>
    <recommendedName>
        <fullName evidence="4">Ubiquitin-ribosomal protein eL40 fusion protein</fullName>
    </recommendedName>
    <alternativeName>
        <fullName>Ubiquitin A-52 residue ribosomal protein fusion product 1</fullName>
    </alternativeName>
    <component>
        <recommendedName>
            <fullName>Ubiquitin</fullName>
        </recommendedName>
    </component>
    <component>
        <recommendedName>
            <fullName evidence="4">Large ribosomal subunit protein eL40</fullName>
        </recommendedName>
        <alternativeName>
            <fullName>60S ribosomal protein L40</fullName>
        </alternativeName>
        <alternativeName>
            <fullName>CEP52</fullName>
        </alternativeName>
        <alternativeName>
            <fullName>CEP53</fullName>
        </alternativeName>
    </component>
</protein>
<comment type="function">
    <molecule>Ubiquitin</molecule>
    <text evidence="1">Exists either covalently attached to another protein, or free (unanchored). When covalently bound, it is conjugated to target proteins via an isopeptide bond either as a monomer (monoubiquitin), a polymer linked via different Lys residues of the ubiquitin (polyubiquitin chains) or a linear polymer linked via the initiator Met of the ubiquitin (linear polyubiquitin chains). Polyubiquitin chains, when attached to a target protein, have different functions depending on the Lys residue of the ubiquitin that is linked: Lys-48-linked is involved in protein degradation via the proteasome. Linear polymer chains formed via attachment by the initiator Met lead to cell signaling. Ubiquitin is usually conjugated to Lys residues of target proteins, however, in rare cases, conjugation to Cys or Ser residues has been observed. When polyubiquitin is free (unanchored-polyubiquitin), it also has distinct roles, such as in activation of protein kinases, and in signaling (By similarity).</text>
</comment>
<comment type="function">
    <molecule>Large ribosomal subunit protein eL40</molecule>
    <text evidence="1">Component of the 60S subunit of the ribosome.</text>
</comment>
<comment type="subunit">
    <molecule>Large ribosomal subunit protein eL40</molecule>
    <text evidence="1">Part of the 60S ribosomal subunit.</text>
</comment>
<comment type="subcellular location">
    <molecule>Ubiquitin</molecule>
    <subcellularLocation>
        <location evidence="1">Cytoplasm</location>
    </subcellularLocation>
    <subcellularLocation>
        <location evidence="1">Nucleus</location>
    </subcellularLocation>
</comment>
<comment type="subcellular location">
    <molecule>Large ribosomal subunit protein eL40</molecule>
    <subcellularLocation>
        <location evidence="1">Cytoplasm</location>
    </subcellularLocation>
</comment>
<comment type="developmental stage">
    <text>60S ribosomal protein L40 and Ubiquitin: Expressed at high levels in fully sporulated oocysts and merozoites. Low levels found in unsporulated oocysts. Absent in partially sporulated oocysts.</text>
</comment>
<comment type="similarity">
    <text evidence="4">In the N-terminal section; belongs to the ubiquitin family.</text>
</comment>
<comment type="similarity">
    <text evidence="4">In the C-terminal section; belongs to the eukaryotic ribosomal protein eL40 family.</text>
</comment>
<proteinExistence type="evidence at transcript level"/>
<organism>
    <name type="scientific">Eimeria bovis</name>
    <dbReference type="NCBI Taxonomy" id="5803"/>
    <lineage>
        <taxon>Eukaryota</taxon>
        <taxon>Sar</taxon>
        <taxon>Alveolata</taxon>
        <taxon>Apicomplexa</taxon>
        <taxon>Conoidasida</taxon>
        <taxon>Coccidia</taxon>
        <taxon>Eucoccidiorida</taxon>
        <taxon>Eimeriorina</taxon>
        <taxon>Eimeriidae</taxon>
        <taxon>Eimeria</taxon>
    </lineage>
</organism>